<dbReference type="EC" id="1.2.1.27" evidence="1"/>
<dbReference type="EMBL" id="BA000004">
    <property type="protein sequence ID" value="BAB06031.1"/>
    <property type="molecule type" value="Genomic_DNA"/>
</dbReference>
<dbReference type="PIR" id="H83938">
    <property type="entry name" value="H83938"/>
</dbReference>
<dbReference type="RefSeq" id="WP_010898468.1">
    <property type="nucleotide sequence ID" value="NC_002570.2"/>
</dbReference>
<dbReference type="SMR" id="Q9KAH5"/>
<dbReference type="STRING" id="272558.gene:10728210"/>
<dbReference type="KEGG" id="bha:BH2312"/>
<dbReference type="eggNOG" id="COG1012">
    <property type="taxonomic scope" value="Bacteria"/>
</dbReference>
<dbReference type="HOGENOM" id="CLU_005391_1_0_9"/>
<dbReference type="OrthoDB" id="9762913at2"/>
<dbReference type="UniPathway" id="UPA00076">
    <property type="reaction ID" value="UER00148"/>
</dbReference>
<dbReference type="Proteomes" id="UP000001258">
    <property type="component" value="Chromosome"/>
</dbReference>
<dbReference type="GO" id="GO:0018478">
    <property type="term" value="F:malonate-semialdehyde dehydrogenase (acetylating) activity"/>
    <property type="evidence" value="ECO:0007669"/>
    <property type="project" value="UniProtKB-UniRule"/>
</dbReference>
<dbReference type="GO" id="GO:0004491">
    <property type="term" value="F:methylmalonate-semialdehyde dehydrogenase (acylating, NAD) activity"/>
    <property type="evidence" value="ECO:0007669"/>
    <property type="project" value="UniProtKB-UniRule"/>
</dbReference>
<dbReference type="GO" id="GO:0019310">
    <property type="term" value="P:inositol catabolic process"/>
    <property type="evidence" value="ECO:0007669"/>
    <property type="project" value="UniProtKB-UniRule"/>
</dbReference>
<dbReference type="GO" id="GO:0006210">
    <property type="term" value="P:thymine catabolic process"/>
    <property type="evidence" value="ECO:0007669"/>
    <property type="project" value="TreeGrafter"/>
</dbReference>
<dbReference type="GO" id="GO:0006574">
    <property type="term" value="P:valine catabolic process"/>
    <property type="evidence" value="ECO:0007669"/>
    <property type="project" value="TreeGrafter"/>
</dbReference>
<dbReference type="CDD" id="cd07085">
    <property type="entry name" value="ALDH_F6_MMSDH"/>
    <property type="match status" value="1"/>
</dbReference>
<dbReference type="FunFam" id="3.40.309.10:FF:000002">
    <property type="entry name" value="Methylmalonate-semialdehyde dehydrogenase (Acylating)"/>
    <property type="match status" value="1"/>
</dbReference>
<dbReference type="FunFam" id="3.40.605.10:FF:000003">
    <property type="entry name" value="Methylmalonate-semialdehyde dehydrogenase [acylating]"/>
    <property type="match status" value="1"/>
</dbReference>
<dbReference type="Gene3D" id="3.40.605.10">
    <property type="entry name" value="Aldehyde Dehydrogenase, Chain A, domain 1"/>
    <property type="match status" value="1"/>
</dbReference>
<dbReference type="Gene3D" id="3.40.309.10">
    <property type="entry name" value="Aldehyde Dehydrogenase, Chain A, domain 2"/>
    <property type="match status" value="1"/>
</dbReference>
<dbReference type="HAMAP" id="MF_01670">
    <property type="entry name" value="IolA"/>
    <property type="match status" value="1"/>
</dbReference>
<dbReference type="InterPro" id="IPR016161">
    <property type="entry name" value="Ald_DH/histidinol_DH"/>
</dbReference>
<dbReference type="InterPro" id="IPR016163">
    <property type="entry name" value="Ald_DH_C"/>
</dbReference>
<dbReference type="InterPro" id="IPR016160">
    <property type="entry name" value="Ald_DH_CS_CYS"/>
</dbReference>
<dbReference type="InterPro" id="IPR016162">
    <property type="entry name" value="Ald_DH_N"/>
</dbReference>
<dbReference type="InterPro" id="IPR015590">
    <property type="entry name" value="Aldehyde_DH_dom"/>
</dbReference>
<dbReference type="InterPro" id="IPR010061">
    <property type="entry name" value="MeMal-semiAld_DH"/>
</dbReference>
<dbReference type="InterPro" id="IPR023510">
    <property type="entry name" value="MSDH_GmP_bac"/>
</dbReference>
<dbReference type="NCBIfam" id="TIGR01722">
    <property type="entry name" value="MMSDH"/>
    <property type="match status" value="1"/>
</dbReference>
<dbReference type="PANTHER" id="PTHR43866">
    <property type="entry name" value="MALONATE-SEMIALDEHYDE DEHYDROGENASE"/>
    <property type="match status" value="1"/>
</dbReference>
<dbReference type="PANTHER" id="PTHR43866:SF4">
    <property type="entry name" value="MALONATE-SEMIALDEHYDE DEHYDROGENASE"/>
    <property type="match status" value="1"/>
</dbReference>
<dbReference type="Pfam" id="PF00171">
    <property type="entry name" value="Aldedh"/>
    <property type="match status" value="1"/>
</dbReference>
<dbReference type="SUPFAM" id="SSF53720">
    <property type="entry name" value="ALDH-like"/>
    <property type="match status" value="1"/>
</dbReference>
<dbReference type="PROSITE" id="PS00070">
    <property type="entry name" value="ALDEHYDE_DEHYDR_CYS"/>
    <property type="match status" value="1"/>
</dbReference>
<name>IOLA_HALH5</name>
<comment type="function">
    <text evidence="1">Catalyzes the oxidation of malonate semialdehyde (MSA) and methylmalonate semialdehyde (MMSA) into acetyl-CoA and propanoyl-CoA, respectively. Is involved in a myo-inositol catabolic pathway. Bicarbonate, and not CO2, is the end-product of the enzymatic reaction.</text>
</comment>
<comment type="catalytic activity">
    <reaction evidence="1">
        <text>3-oxopropanoate + NAD(+) + CoA + H2O = hydrogencarbonate + acetyl-CoA + NADH + H(+)</text>
        <dbReference type="Rhea" id="RHEA:76615"/>
        <dbReference type="ChEBI" id="CHEBI:15377"/>
        <dbReference type="ChEBI" id="CHEBI:15378"/>
        <dbReference type="ChEBI" id="CHEBI:17544"/>
        <dbReference type="ChEBI" id="CHEBI:33190"/>
        <dbReference type="ChEBI" id="CHEBI:57287"/>
        <dbReference type="ChEBI" id="CHEBI:57288"/>
        <dbReference type="ChEBI" id="CHEBI:57540"/>
        <dbReference type="ChEBI" id="CHEBI:57945"/>
        <dbReference type="EC" id="1.2.1.27"/>
    </reaction>
    <physiologicalReaction direction="left-to-right" evidence="1">
        <dbReference type="Rhea" id="RHEA:76616"/>
    </physiologicalReaction>
</comment>
<comment type="catalytic activity">
    <reaction evidence="1">
        <text>2-methyl-3-oxopropanoate + NAD(+) + CoA + H2O = propanoyl-CoA + hydrogencarbonate + NADH + H(+)</text>
        <dbReference type="Rhea" id="RHEA:20804"/>
        <dbReference type="ChEBI" id="CHEBI:15377"/>
        <dbReference type="ChEBI" id="CHEBI:15378"/>
        <dbReference type="ChEBI" id="CHEBI:17544"/>
        <dbReference type="ChEBI" id="CHEBI:57287"/>
        <dbReference type="ChEBI" id="CHEBI:57392"/>
        <dbReference type="ChEBI" id="CHEBI:57540"/>
        <dbReference type="ChEBI" id="CHEBI:57700"/>
        <dbReference type="ChEBI" id="CHEBI:57945"/>
        <dbReference type="EC" id="1.2.1.27"/>
    </reaction>
    <physiologicalReaction direction="left-to-right" evidence="1">
        <dbReference type="Rhea" id="RHEA:20805"/>
    </physiologicalReaction>
</comment>
<comment type="pathway">
    <text evidence="1">Polyol metabolism; myo-inositol degradation into acetyl-CoA; acetyl-CoA from myo-inositol: step 7/7.</text>
</comment>
<comment type="subunit">
    <text evidence="1">Homotetramer.</text>
</comment>
<comment type="similarity">
    <text evidence="1">Belongs to the aldehyde dehydrogenase family. IolA subfamily.</text>
</comment>
<sequence>MANLATGEKLKNFIGGQWVESDSGKTEAVPNPATGEILAHVPISNREDLDRAVSVAKEAFKTWGKTPVPRRARVLFKYQQLLVENWEELARLVTLENGKSYKEAYGEVQRGIECVEFAAGAPSLMMGKQLPDIATNIESGMYRYPIGVVGGITPFNFPMMVPCWMFPLAIACGNTFVLKPSERTPLLANRLAELFTEAGLPEGVLNIVHGAHDVVNGLLEHPDVKAISFVGSQPVAEYVYKTASQHGKRVQALAGAKNHSIVMPDADLDGAVNQIVNAAYGSAGERCMAAAVVVAVGEVAEPLMEKLQKAVNEITIGNGLDDDVFLGPVIRESHKQKTENYIELGEKEGATLVRDGRKDNVSKDGYFLGPTLFDNVTTEMTIWKEEIFAPVLSVVRVESLDEAIQLTNQSEFANGACLYTTNGSSVRKFREEIDAGMLGINLGVPAPMAFFPFSGWKNSFYGDLHANGTDGVEFYTRKKMITARW</sequence>
<evidence type="ECO:0000255" key="1">
    <source>
        <dbReference type="HAMAP-Rule" id="MF_01670"/>
    </source>
</evidence>
<protein>
    <recommendedName>
        <fullName evidence="1">Malonate-semialdehyde dehydrogenase</fullName>
        <shortName evidence="1">MSA dehydrogenase</shortName>
        <ecNumber evidence="1">1.2.1.27</ecNumber>
    </recommendedName>
    <alternativeName>
        <fullName evidence="1">Methylmalonate-semialdehyde dehydrogenase</fullName>
        <shortName evidence="1">MMSA dehydrogenase</shortName>
        <shortName evidence="1">MSDH</shortName>
    </alternativeName>
</protein>
<feature type="chain" id="PRO_0000352328" description="Malonate-semialdehyde dehydrogenase">
    <location>
        <begin position="1"/>
        <end position="485"/>
    </location>
</feature>
<feature type="active site" description="Nucleophile" evidence="1">
    <location>
        <position position="287"/>
    </location>
</feature>
<feature type="binding site" evidence="1">
    <location>
        <position position="155"/>
    </location>
    <ligand>
        <name>NAD(+)</name>
        <dbReference type="ChEBI" id="CHEBI:57540"/>
    </ligand>
</feature>
<feature type="binding site" evidence="1">
    <location>
        <position position="179"/>
    </location>
    <ligand>
        <name>NAD(+)</name>
        <dbReference type="ChEBI" id="CHEBI:57540"/>
    </ligand>
</feature>
<feature type="binding site" evidence="1">
    <location>
        <position position="182"/>
    </location>
    <ligand>
        <name>NAD(+)</name>
        <dbReference type="ChEBI" id="CHEBI:57540"/>
    </ligand>
</feature>
<feature type="binding site" evidence="1">
    <location>
        <position position="183"/>
    </location>
    <ligand>
        <name>NAD(+)</name>
        <dbReference type="ChEBI" id="CHEBI:57540"/>
    </ligand>
</feature>
<feature type="binding site" evidence="1">
    <location>
        <position position="232"/>
    </location>
    <ligand>
        <name>NAD(+)</name>
        <dbReference type="ChEBI" id="CHEBI:57540"/>
    </ligand>
</feature>
<feature type="binding site" evidence="1">
    <location>
        <position position="386"/>
    </location>
    <ligand>
        <name>NAD(+)</name>
        <dbReference type="ChEBI" id="CHEBI:57540"/>
    </ligand>
</feature>
<reference key="1">
    <citation type="journal article" date="2000" name="Nucleic Acids Res.">
        <title>Complete genome sequence of the alkaliphilic bacterium Bacillus halodurans and genomic sequence comparison with Bacillus subtilis.</title>
        <authorList>
            <person name="Takami H."/>
            <person name="Nakasone K."/>
            <person name="Takaki Y."/>
            <person name="Maeno G."/>
            <person name="Sasaki R."/>
            <person name="Masui N."/>
            <person name="Fuji F."/>
            <person name="Hirama C."/>
            <person name="Nakamura Y."/>
            <person name="Ogasawara N."/>
            <person name="Kuhara S."/>
            <person name="Horikoshi K."/>
        </authorList>
    </citation>
    <scope>NUCLEOTIDE SEQUENCE [LARGE SCALE GENOMIC DNA]</scope>
    <source>
        <strain>ATCC BAA-125 / DSM 18197 / FERM 7344 / JCM 9153 / C-125</strain>
    </source>
</reference>
<accession>Q9KAH5</accession>
<organism>
    <name type="scientific">Halalkalibacterium halodurans (strain ATCC BAA-125 / DSM 18197 / FERM 7344 / JCM 9153 / C-125)</name>
    <name type="common">Bacillus halodurans</name>
    <dbReference type="NCBI Taxonomy" id="272558"/>
    <lineage>
        <taxon>Bacteria</taxon>
        <taxon>Bacillati</taxon>
        <taxon>Bacillota</taxon>
        <taxon>Bacilli</taxon>
        <taxon>Bacillales</taxon>
        <taxon>Bacillaceae</taxon>
        <taxon>Halalkalibacterium (ex Joshi et al. 2022)</taxon>
    </lineage>
</organism>
<keyword id="KW-0520">NAD</keyword>
<keyword id="KW-0560">Oxidoreductase</keyword>
<keyword id="KW-1185">Reference proteome</keyword>
<proteinExistence type="inferred from homology"/>
<gene>
    <name evidence="1" type="primary">iolA</name>
    <name type="ordered locus">BH2312</name>
</gene>